<evidence type="ECO:0000255" key="1">
    <source>
        <dbReference type="HAMAP-Rule" id="MF_00131"/>
    </source>
</evidence>
<protein>
    <recommendedName>
        <fullName evidence="1">Tryptophan synthase alpha chain</fullName>
        <ecNumber evidence="1">4.2.1.20</ecNumber>
    </recommendedName>
</protein>
<proteinExistence type="inferred from homology"/>
<accession>Q8FXY6</accession>
<accession>G0K956</accession>
<keyword id="KW-0028">Amino-acid biosynthesis</keyword>
<keyword id="KW-0057">Aromatic amino acid biosynthesis</keyword>
<keyword id="KW-0456">Lyase</keyword>
<keyword id="KW-0822">Tryptophan biosynthesis</keyword>
<reference key="1">
    <citation type="journal article" date="2002" name="Proc. Natl. Acad. Sci. U.S.A.">
        <title>The Brucella suis genome reveals fundamental similarities between animal and plant pathogens and symbionts.</title>
        <authorList>
            <person name="Paulsen I.T."/>
            <person name="Seshadri R."/>
            <person name="Nelson K.E."/>
            <person name="Eisen J.A."/>
            <person name="Heidelberg J.F."/>
            <person name="Read T.D."/>
            <person name="Dodson R.J."/>
            <person name="Umayam L.A."/>
            <person name="Brinkac L.M."/>
            <person name="Beanan M.J."/>
            <person name="Daugherty S.C."/>
            <person name="DeBoy R.T."/>
            <person name="Durkin A.S."/>
            <person name="Kolonay J.F."/>
            <person name="Madupu R."/>
            <person name="Nelson W.C."/>
            <person name="Ayodeji B."/>
            <person name="Kraul M."/>
            <person name="Shetty J."/>
            <person name="Malek J.A."/>
            <person name="Van Aken S.E."/>
            <person name="Riedmuller S."/>
            <person name="Tettelin H."/>
            <person name="Gill S.R."/>
            <person name="White O."/>
            <person name="Salzberg S.L."/>
            <person name="Hoover D.L."/>
            <person name="Lindler L.E."/>
            <person name="Halling S.M."/>
            <person name="Boyle S.M."/>
            <person name="Fraser C.M."/>
        </authorList>
    </citation>
    <scope>NUCLEOTIDE SEQUENCE [LARGE SCALE GENOMIC DNA]</scope>
    <source>
        <strain>1330</strain>
    </source>
</reference>
<reference key="2">
    <citation type="journal article" date="2011" name="J. Bacteriol.">
        <title>Revised genome sequence of Brucella suis 1330.</title>
        <authorList>
            <person name="Tae H."/>
            <person name="Shallom S."/>
            <person name="Settlage R."/>
            <person name="Preston D."/>
            <person name="Adams L.G."/>
            <person name="Garner H.R."/>
        </authorList>
    </citation>
    <scope>NUCLEOTIDE SEQUENCE [LARGE SCALE GENOMIC DNA]</scope>
    <source>
        <strain>1330</strain>
    </source>
</reference>
<name>TRPA_BRUSU</name>
<organism>
    <name type="scientific">Brucella suis biovar 1 (strain 1330)</name>
    <dbReference type="NCBI Taxonomy" id="204722"/>
    <lineage>
        <taxon>Bacteria</taxon>
        <taxon>Pseudomonadati</taxon>
        <taxon>Pseudomonadota</taxon>
        <taxon>Alphaproteobacteria</taxon>
        <taxon>Hyphomicrobiales</taxon>
        <taxon>Brucellaceae</taxon>
        <taxon>Brucella/Ochrobactrum group</taxon>
        <taxon>Brucella</taxon>
    </lineage>
</organism>
<sequence>MTTRIDTKFAELKAEGRPALVTYFMGGDPDLETALKVMKALPKAGADVIELGMPFSDPMADGPAIQAAGLRALNAGQTLAKTLYMAAEFRKEDDTTPIVMMGYYNPIYVYGVERFLTDAKASGVDGLIVVDLPSEMDAELCIPAMKAGINFIRLTTPTTDDKRLPKVLHNSSGFVYYVSMNGITGAAIADTAKVGEAVRHIKKSTDLPICVGFGVKTPEQAAAIATHADGVVVGTAIVNAIAGELDEKGKVKGDPVAAATRLVHALAESVRATRLEAAQ</sequence>
<dbReference type="EC" id="4.2.1.20" evidence="1"/>
<dbReference type="EMBL" id="AE014291">
    <property type="protein sequence ID" value="AAN30998.1"/>
    <property type="molecule type" value="Genomic_DNA"/>
</dbReference>
<dbReference type="EMBL" id="CP002997">
    <property type="protein sequence ID" value="AEM19415.1"/>
    <property type="molecule type" value="Genomic_DNA"/>
</dbReference>
<dbReference type="RefSeq" id="WP_004687772.1">
    <property type="nucleotide sequence ID" value="NZ_KN046804.1"/>
</dbReference>
<dbReference type="SMR" id="Q8FXY6"/>
<dbReference type="GeneID" id="55591674"/>
<dbReference type="KEGG" id="bms:BR2108"/>
<dbReference type="KEGG" id="bsi:BS1330_I2102"/>
<dbReference type="PATRIC" id="fig|204722.21.peg.710"/>
<dbReference type="HOGENOM" id="CLU_016734_0_0_5"/>
<dbReference type="PhylomeDB" id="Q8FXY6"/>
<dbReference type="UniPathway" id="UPA00035">
    <property type="reaction ID" value="UER00044"/>
</dbReference>
<dbReference type="Proteomes" id="UP000007104">
    <property type="component" value="Chromosome I"/>
</dbReference>
<dbReference type="GO" id="GO:0005829">
    <property type="term" value="C:cytosol"/>
    <property type="evidence" value="ECO:0007669"/>
    <property type="project" value="TreeGrafter"/>
</dbReference>
<dbReference type="GO" id="GO:0004834">
    <property type="term" value="F:tryptophan synthase activity"/>
    <property type="evidence" value="ECO:0007669"/>
    <property type="project" value="UniProtKB-UniRule"/>
</dbReference>
<dbReference type="CDD" id="cd04724">
    <property type="entry name" value="Tryptophan_synthase_alpha"/>
    <property type="match status" value="1"/>
</dbReference>
<dbReference type="FunFam" id="3.20.20.70:FF:000037">
    <property type="entry name" value="Tryptophan synthase alpha chain"/>
    <property type="match status" value="1"/>
</dbReference>
<dbReference type="Gene3D" id="3.20.20.70">
    <property type="entry name" value="Aldolase class I"/>
    <property type="match status" value="1"/>
</dbReference>
<dbReference type="HAMAP" id="MF_00131">
    <property type="entry name" value="Trp_synth_alpha"/>
    <property type="match status" value="1"/>
</dbReference>
<dbReference type="InterPro" id="IPR013785">
    <property type="entry name" value="Aldolase_TIM"/>
</dbReference>
<dbReference type="InterPro" id="IPR011060">
    <property type="entry name" value="RibuloseP-bd_barrel"/>
</dbReference>
<dbReference type="InterPro" id="IPR018204">
    <property type="entry name" value="Trp_synthase_alpha_AS"/>
</dbReference>
<dbReference type="InterPro" id="IPR002028">
    <property type="entry name" value="Trp_synthase_suA"/>
</dbReference>
<dbReference type="NCBIfam" id="TIGR00262">
    <property type="entry name" value="trpA"/>
    <property type="match status" value="1"/>
</dbReference>
<dbReference type="PANTHER" id="PTHR43406:SF1">
    <property type="entry name" value="TRYPTOPHAN SYNTHASE ALPHA CHAIN, CHLOROPLASTIC"/>
    <property type="match status" value="1"/>
</dbReference>
<dbReference type="PANTHER" id="PTHR43406">
    <property type="entry name" value="TRYPTOPHAN SYNTHASE, ALPHA CHAIN"/>
    <property type="match status" value="1"/>
</dbReference>
<dbReference type="Pfam" id="PF00290">
    <property type="entry name" value="Trp_syntA"/>
    <property type="match status" value="1"/>
</dbReference>
<dbReference type="SUPFAM" id="SSF51366">
    <property type="entry name" value="Ribulose-phoshate binding barrel"/>
    <property type="match status" value="1"/>
</dbReference>
<dbReference type="PROSITE" id="PS00167">
    <property type="entry name" value="TRP_SYNTHASE_ALPHA"/>
    <property type="match status" value="1"/>
</dbReference>
<feature type="chain" id="PRO_0000098753" description="Tryptophan synthase alpha chain">
    <location>
        <begin position="1"/>
        <end position="279"/>
    </location>
</feature>
<feature type="active site" description="Proton acceptor" evidence="1">
    <location>
        <position position="50"/>
    </location>
</feature>
<feature type="active site" description="Proton acceptor" evidence="1">
    <location>
        <position position="61"/>
    </location>
</feature>
<comment type="function">
    <text evidence="1">The alpha subunit is responsible for the aldol cleavage of indoleglycerol phosphate to indole and glyceraldehyde 3-phosphate.</text>
</comment>
<comment type="catalytic activity">
    <reaction evidence="1">
        <text>(1S,2R)-1-C-(indol-3-yl)glycerol 3-phosphate + L-serine = D-glyceraldehyde 3-phosphate + L-tryptophan + H2O</text>
        <dbReference type="Rhea" id="RHEA:10532"/>
        <dbReference type="ChEBI" id="CHEBI:15377"/>
        <dbReference type="ChEBI" id="CHEBI:33384"/>
        <dbReference type="ChEBI" id="CHEBI:57912"/>
        <dbReference type="ChEBI" id="CHEBI:58866"/>
        <dbReference type="ChEBI" id="CHEBI:59776"/>
        <dbReference type="EC" id="4.2.1.20"/>
    </reaction>
</comment>
<comment type="pathway">
    <text evidence="1">Amino-acid biosynthesis; L-tryptophan biosynthesis; L-tryptophan from chorismate: step 5/5.</text>
</comment>
<comment type="subunit">
    <text evidence="1">Tetramer of two alpha and two beta chains.</text>
</comment>
<comment type="similarity">
    <text evidence="1">Belongs to the TrpA family.</text>
</comment>
<gene>
    <name evidence="1" type="primary">trpA</name>
    <name type="ordered locus">BR2108</name>
    <name type="ordered locus">BS1330_I2102</name>
</gene>